<comment type="subcellular location">
    <subcellularLocation>
        <location evidence="1">Cell membrane</location>
        <topology evidence="1">Lipid-anchor</topology>
    </subcellularLocation>
</comment>
<comment type="similarity">
    <text evidence="3">Belongs to the MG307/MG309/MG338 family.</text>
</comment>
<evidence type="ECO:0000255" key="1">
    <source>
        <dbReference type="PROSITE-ProRule" id="PRU00303"/>
    </source>
</evidence>
<evidence type="ECO:0000256" key="2">
    <source>
        <dbReference type="SAM" id="MobiDB-lite"/>
    </source>
</evidence>
<evidence type="ECO:0000305" key="3"/>
<proteinExistence type="inferred from homology"/>
<keyword id="KW-1003">Cell membrane</keyword>
<keyword id="KW-0449">Lipoprotein</keyword>
<keyword id="KW-0472">Membrane</keyword>
<keyword id="KW-0564">Palmitate</keyword>
<keyword id="KW-1185">Reference proteome</keyword>
<keyword id="KW-0732">Signal</keyword>
<accession>P75296</accession>
<protein>
    <recommendedName>
        <fullName>Uncharacterized lipoprotein MG338 homolog</fullName>
    </recommendedName>
</protein>
<reference key="1">
    <citation type="journal article" date="1996" name="Nucleic Acids Res.">
        <title>Complete sequence analysis of the genome of the bacterium Mycoplasma pneumoniae.</title>
        <authorList>
            <person name="Himmelreich R."/>
            <person name="Hilbert H."/>
            <person name="Plagens H."/>
            <person name="Pirkl E."/>
            <person name="Li B.-C."/>
            <person name="Herrmann R."/>
        </authorList>
    </citation>
    <scope>NUCLEOTIDE SEQUENCE [LARGE SCALE GENOMIC DNA]</scope>
    <source>
        <strain>ATCC 29342 / M129 / Subtype 1</strain>
    </source>
</reference>
<feature type="signal peptide" evidence="1">
    <location>
        <begin position="1"/>
        <end position="26"/>
    </location>
</feature>
<feature type="chain" id="PRO_0000014037" description="Uncharacterized lipoprotein MG338 homolog">
    <location>
        <begin position="27"/>
        <end position="1300"/>
    </location>
</feature>
<feature type="region of interest" description="Disordered" evidence="2">
    <location>
        <begin position="464"/>
        <end position="487"/>
    </location>
</feature>
<feature type="region of interest" description="Disordered" evidence="2">
    <location>
        <begin position="620"/>
        <end position="639"/>
    </location>
</feature>
<feature type="region of interest" description="Disordered" evidence="2">
    <location>
        <begin position="774"/>
        <end position="797"/>
    </location>
</feature>
<feature type="region of interest" description="Disordered" evidence="2">
    <location>
        <begin position="1244"/>
        <end position="1269"/>
    </location>
</feature>
<feature type="compositionally biased region" description="Low complexity" evidence="2">
    <location>
        <begin position="464"/>
        <end position="478"/>
    </location>
</feature>
<feature type="compositionally biased region" description="Polar residues" evidence="2">
    <location>
        <begin position="620"/>
        <end position="637"/>
    </location>
</feature>
<feature type="compositionally biased region" description="Polar residues" evidence="2">
    <location>
        <begin position="774"/>
        <end position="783"/>
    </location>
</feature>
<feature type="compositionally biased region" description="Basic and acidic residues" evidence="2">
    <location>
        <begin position="785"/>
        <end position="797"/>
    </location>
</feature>
<feature type="compositionally biased region" description="Basic residues" evidence="2">
    <location>
        <begin position="1257"/>
        <end position="1269"/>
    </location>
</feature>
<feature type="lipid moiety-binding region" description="N-palmitoyl cysteine" evidence="1">
    <location>
        <position position="27"/>
    </location>
</feature>
<feature type="lipid moiety-binding region" description="S-diacylglycerol cysteine" evidence="1">
    <location>
        <position position="27"/>
    </location>
</feature>
<sequence length="1300" mass="143063">MGYKLKRWPLVAFTFTGIGLGVVLAACSALNTSNLFPRQNRSKQLIGFTENNIIKPEAVLKAALAEDNGTETILRVNFGEALKSWYQNNKDRNIATRLTIFSENVEDEHDNLLDQKQQAEPINWPIELQKEYDQWGGSESSWKALKLYDRLIADFQSLIFSNIVANVQLTDGSDQFKPTTKDNLDSTSNKIKFVNSKPNDPNGEFFANLQAYLFAQWVVEENPLPLTQAFFAYQAPKDGLDSLYDQAAIGSALQLGYAFPAFREPNNGQSQGKTTFDPTPNSAQNFGDFIKAVFPEQKNGQTQQSNTSSRTGLFDWQTKWNTNGAANKLLVTKSNLRGAFKGVGLATAIIDQYEYLVGGSKTSSLPEVKVDSNKSNQNPLDSFFMEGKDAVAIRSIVSRAKIAMTDQTPGFKVNPAFVKVKQSQQNDTFYQNQRKLSGGQSGDNNSQGKHHYLQDAVRLTSSQAMAAASTGADSSSGTNVGGSSGGNSVLIPLPRSAALTHTQQQVQQTTSTLQTPVYARGDDGTYALAIDGGDYFLANNKRDFTKQADILLYRYLQAKSNNFKENGVEFSLNLLESGSLFQTWAQTGLTAKLYGALVAMMGSGQGTQVKGSVQGSSRAASVSVQTTQQNRQQSTDTQESEVVKLAKSLLKSSADLAKPFTDNPTFKKALTDIQSEYKDYLAAAGKLSEFKKDLGEVSGLQQAIIDRADKYIQLEKQAQKSAIGLGQPLPYQRASDGSYPALEKFFIPEDSAADGKVKASESGSAALVTLKTTDSQKSTNTVKQPDIKPTRENNDKKLKQLTSDVETKASSLITKWGATPQIGSQFSEIVSLKSKDNKPQTNMILALLSDVGIKWTKILNSFKEWFFTNTNDFKNNYDSEKKELKGNEYKDFNDLVKQTLYLRSWQRLTSKEKFGYYKELGSVKAQAAQSGMVSLSSSAAVANAVASSGMQKSGDQTLLELGKKAFESELEASSSDGQYKYLRFLSTLMWLVKDGAKNYKRLLQQAITVGTRAFVSWTVSYDDTATASAAAAKAQVAVLKTAQATNTQSDNPFNKFVQNPDYVQGSETNWFNDKSTPIKPDSLLESESTYNFTAEPFDDKTKSQKRSTGGTTNEKHFFGFNGLTINSPQSVSTASAGLTEQIFNNFGQLVTSSDKSGALSQYKDKATLKRLIQNTNSDAELNAFGEVLHRAVNVDTSNLGRFNSSGEPLISFDNKKKFLVDVVDKLDDVYFNKFEGYVGQTKVKMSDSSSSSQGTKTIRKPKPHHSPRTRVSRLWAMSFRLPTRTLTKFLLVEKLIRTVL</sequence>
<gene>
    <name type="ordered locus">MPN_489</name>
    <name type="ORF">MP353</name>
    <name type="ORF">P02_orf1300</name>
</gene>
<organism>
    <name type="scientific">Mycoplasma pneumoniae (strain ATCC 29342 / M129 / Subtype 1)</name>
    <name type="common">Mycoplasmoides pneumoniae</name>
    <dbReference type="NCBI Taxonomy" id="272634"/>
    <lineage>
        <taxon>Bacteria</taxon>
        <taxon>Bacillati</taxon>
        <taxon>Mycoplasmatota</taxon>
        <taxon>Mycoplasmoidales</taxon>
        <taxon>Mycoplasmoidaceae</taxon>
        <taxon>Mycoplasmoides</taxon>
    </lineage>
</organism>
<name>Y489_MYCPN</name>
<dbReference type="EMBL" id="U00089">
    <property type="protein sequence ID" value="AAB96001.1"/>
    <property type="molecule type" value="Genomic_DNA"/>
</dbReference>
<dbReference type="PIR" id="S73679">
    <property type="entry name" value="S73679"/>
</dbReference>
<dbReference type="RefSeq" id="NP_110177.1">
    <property type="nucleotide sequence ID" value="NC_000912.1"/>
</dbReference>
<dbReference type="RefSeq" id="WP_010874845.1">
    <property type="nucleotide sequence ID" value="NC_000912.1"/>
</dbReference>
<dbReference type="STRING" id="272634.MPN_489"/>
<dbReference type="EnsemblBacteria" id="AAB96001">
    <property type="protein sequence ID" value="AAB96001"/>
    <property type="gene ID" value="MPN_489"/>
</dbReference>
<dbReference type="KEGG" id="mpn:MPN_489"/>
<dbReference type="PATRIC" id="fig|272634.6.peg.529"/>
<dbReference type="HOGENOM" id="CLU_007912_0_0_14"/>
<dbReference type="OrthoDB" id="394364at2"/>
<dbReference type="BioCyc" id="MPNE272634:G1GJ3-800-MONOMER"/>
<dbReference type="Proteomes" id="UP000000808">
    <property type="component" value="Chromosome"/>
</dbReference>
<dbReference type="GO" id="GO:0005886">
    <property type="term" value="C:plasma membrane"/>
    <property type="evidence" value="ECO:0007669"/>
    <property type="project" value="UniProtKB-SubCell"/>
</dbReference>
<dbReference type="InterPro" id="IPR022186">
    <property type="entry name" value="DUF3713"/>
</dbReference>
<dbReference type="Pfam" id="PF12506">
    <property type="entry name" value="DUF3713"/>
    <property type="match status" value="1"/>
</dbReference>
<dbReference type="PROSITE" id="PS51257">
    <property type="entry name" value="PROKAR_LIPOPROTEIN"/>
    <property type="match status" value="1"/>
</dbReference>